<protein>
    <recommendedName>
        <fullName evidence="16">Phospholipid-transporting ATPase IC</fullName>
        <ecNumber evidence="1">7.6.2.1</ecNumber>
    </recommendedName>
    <alternativeName>
        <fullName>ATPase class I type 8B member 1</fullName>
    </alternativeName>
    <alternativeName>
        <fullName>P4-ATPase flippase complex alpha subunit ATP8B1</fullName>
    </alternativeName>
</protein>
<accession>Q148W0</accession>
<accession>Q3U010</accession>
<accession>Q6R964</accession>
<organism>
    <name type="scientific">Mus musculus</name>
    <name type="common">Mouse</name>
    <dbReference type="NCBI Taxonomy" id="10090"/>
    <lineage>
        <taxon>Eukaryota</taxon>
        <taxon>Metazoa</taxon>
        <taxon>Chordata</taxon>
        <taxon>Craniata</taxon>
        <taxon>Vertebrata</taxon>
        <taxon>Euteleostomi</taxon>
        <taxon>Mammalia</taxon>
        <taxon>Eutheria</taxon>
        <taxon>Euarchontoglires</taxon>
        <taxon>Glires</taxon>
        <taxon>Rodentia</taxon>
        <taxon>Myomorpha</taxon>
        <taxon>Muroidea</taxon>
        <taxon>Muridae</taxon>
        <taxon>Murinae</taxon>
        <taxon>Mus</taxon>
        <taxon>Mus</taxon>
    </lineage>
</organism>
<evidence type="ECO:0000250" key="1">
    <source>
        <dbReference type="UniProtKB" id="O43520"/>
    </source>
</evidence>
<evidence type="ECO:0000250" key="2">
    <source>
        <dbReference type="UniProtKB" id="P04191"/>
    </source>
</evidence>
<evidence type="ECO:0000250" key="3">
    <source>
        <dbReference type="UniProtKB" id="Q8NB49"/>
    </source>
</evidence>
<evidence type="ECO:0000250" key="4">
    <source>
        <dbReference type="UniProtKB" id="Q9HD20"/>
    </source>
</evidence>
<evidence type="ECO:0000250" key="5">
    <source>
        <dbReference type="UniProtKB" id="Q9Y2Q0"/>
    </source>
</evidence>
<evidence type="ECO:0000255" key="6"/>
<evidence type="ECO:0000256" key="7">
    <source>
        <dbReference type="SAM" id="MobiDB-lite"/>
    </source>
</evidence>
<evidence type="ECO:0000269" key="8">
    <source>
    </source>
</evidence>
<evidence type="ECO:0000269" key="9">
    <source>
    </source>
</evidence>
<evidence type="ECO:0000269" key="10">
    <source>
    </source>
</evidence>
<evidence type="ECO:0000269" key="11">
    <source>
    </source>
</evidence>
<evidence type="ECO:0000269" key="12">
    <source>
    </source>
</evidence>
<evidence type="ECO:0000269" key="13">
    <source>
    </source>
</evidence>
<evidence type="ECO:0000269" key="14">
    <source>
    </source>
</evidence>
<evidence type="ECO:0000269" key="15">
    <source>
    </source>
</evidence>
<evidence type="ECO:0000305" key="16"/>
<evidence type="ECO:0000312" key="17">
    <source>
        <dbReference type="MGI" id="MGI:1859665"/>
    </source>
</evidence>
<evidence type="ECO:0007744" key="18">
    <source>
    </source>
</evidence>
<evidence type="ECO:0007744" key="19">
    <source>
    </source>
</evidence>
<gene>
    <name evidence="17" type="primary">Atp8b1</name>
</gene>
<name>AT8B1_MOUSE</name>
<dbReference type="EC" id="7.6.2.1" evidence="1"/>
<dbReference type="EMBL" id="AY506548">
    <property type="protein sequence ID" value="AAR90342.1"/>
    <property type="molecule type" value="mRNA"/>
</dbReference>
<dbReference type="EMBL" id="AK157316">
    <property type="protein sequence ID" value="BAE34046.1"/>
    <property type="molecule type" value="mRNA"/>
</dbReference>
<dbReference type="EMBL" id="BC117946">
    <property type="protein sequence ID" value="AAI17947.1"/>
    <property type="molecule type" value="mRNA"/>
</dbReference>
<dbReference type="CCDS" id="CCDS29304.1"/>
<dbReference type="RefSeq" id="NP_001001488.2">
    <property type="nucleotide sequence ID" value="NM_001001488.3"/>
</dbReference>
<dbReference type="SMR" id="Q148W0"/>
<dbReference type="BioGRID" id="207714">
    <property type="interactions" value="1"/>
</dbReference>
<dbReference type="FunCoup" id="Q148W0">
    <property type="interactions" value="94"/>
</dbReference>
<dbReference type="STRING" id="10090.ENSMUSP00000025482"/>
<dbReference type="GlyGen" id="Q148W0">
    <property type="glycosylation" value="2 sites"/>
</dbReference>
<dbReference type="iPTMnet" id="Q148W0"/>
<dbReference type="PhosphoSitePlus" id="Q148W0"/>
<dbReference type="PaxDb" id="10090-ENSMUSP00000025482"/>
<dbReference type="PeptideAtlas" id="Q148W0"/>
<dbReference type="ProteomicsDB" id="265134"/>
<dbReference type="Antibodypedia" id="9722">
    <property type="antibodies" value="50 antibodies from 12 providers"/>
</dbReference>
<dbReference type="DNASU" id="54670"/>
<dbReference type="Ensembl" id="ENSMUST00000025482.10">
    <property type="protein sequence ID" value="ENSMUSP00000025482.9"/>
    <property type="gene ID" value="ENSMUSG00000039529.10"/>
</dbReference>
<dbReference type="GeneID" id="54670"/>
<dbReference type="KEGG" id="mmu:54670"/>
<dbReference type="UCSC" id="uc008fem.1">
    <property type="organism name" value="mouse"/>
</dbReference>
<dbReference type="AGR" id="MGI:1859665"/>
<dbReference type="CTD" id="5205"/>
<dbReference type="MGI" id="MGI:1859665">
    <property type="gene designation" value="Atp8b1"/>
</dbReference>
<dbReference type="VEuPathDB" id="HostDB:ENSMUSG00000039529"/>
<dbReference type="eggNOG" id="KOG0206">
    <property type="taxonomic scope" value="Eukaryota"/>
</dbReference>
<dbReference type="GeneTree" id="ENSGT00940000158002"/>
<dbReference type="HOGENOM" id="CLU_000846_3_2_1"/>
<dbReference type="InParanoid" id="Q148W0"/>
<dbReference type="OMA" id="YVYGQRN"/>
<dbReference type="OrthoDB" id="377733at2759"/>
<dbReference type="PhylomeDB" id="Q148W0"/>
<dbReference type="TreeFam" id="TF300654"/>
<dbReference type="BRENDA" id="7.6.2.1">
    <property type="organism ID" value="3474"/>
</dbReference>
<dbReference type="Reactome" id="R-MMU-936837">
    <property type="pathway name" value="Ion transport by P-type ATPases"/>
</dbReference>
<dbReference type="BioGRID-ORCS" id="54670">
    <property type="hits" value="3 hits in 79 CRISPR screens"/>
</dbReference>
<dbReference type="PRO" id="PR:Q148W0"/>
<dbReference type="Proteomes" id="UP000000589">
    <property type="component" value="Chromosome 18"/>
</dbReference>
<dbReference type="RNAct" id="Q148W0">
    <property type="molecule type" value="protein"/>
</dbReference>
<dbReference type="Bgee" id="ENSMUSG00000039529">
    <property type="expression patterns" value="Expressed in epithelium of small intestine and 147 other cell types or tissues"/>
</dbReference>
<dbReference type="ExpressionAtlas" id="Q148W0">
    <property type="expression patterns" value="baseline and differential"/>
</dbReference>
<dbReference type="GO" id="GO:0016324">
    <property type="term" value="C:apical plasma membrane"/>
    <property type="evidence" value="ECO:0007669"/>
    <property type="project" value="UniProtKB-SubCell"/>
</dbReference>
<dbReference type="GO" id="GO:0005829">
    <property type="term" value="C:cytosol"/>
    <property type="evidence" value="ECO:0007669"/>
    <property type="project" value="Ensembl"/>
</dbReference>
<dbReference type="GO" id="GO:0005783">
    <property type="term" value="C:endoplasmic reticulum"/>
    <property type="evidence" value="ECO:0007669"/>
    <property type="project" value="UniProtKB-SubCell"/>
</dbReference>
<dbReference type="GO" id="GO:0005794">
    <property type="term" value="C:Golgi apparatus"/>
    <property type="evidence" value="ECO:0007669"/>
    <property type="project" value="UniProtKB-SubCell"/>
</dbReference>
<dbReference type="GO" id="GO:0016604">
    <property type="term" value="C:nuclear body"/>
    <property type="evidence" value="ECO:0007669"/>
    <property type="project" value="Ensembl"/>
</dbReference>
<dbReference type="GO" id="GO:1990531">
    <property type="term" value="C:phospholipid-translocating ATPase complex"/>
    <property type="evidence" value="ECO:0000250"/>
    <property type="project" value="UniProtKB"/>
</dbReference>
<dbReference type="GO" id="GO:0005886">
    <property type="term" value="C:plasma membrane"/>
    <property type="evidence" value="ECO:0000314"/>
    <property type="project" value="BHF-UCL"/>
</dbReference>
<dbReference type="GO" id="GO:0032420">
    <property type="term" value="C:stereocilium"/>
    <property type="evidence" value="ECO:0000314"/>
    <property type="project" value="UniProtKB"/>
</dbReference>
<dbReference type="GO" id="GO:0015247">
    <property type="term" value="F:aminophospholipid flippase activity"/>
    <property type="evidence" value="ECO:0000314"/>
    <property type="project" value="BHF-UCL"/>
</dbReference>
<dbReference type="GO" id="GO:0005524">
    <property type="term" value="F:ATP binding"/>
    <property type="evidence" value="ECO:0007669"/>
    <property type="project" value="UniProtKB-KW"/>
</dbReference>
<dbReference type="GO" id="GO:0016887">
    <property type="term" value="F:ATP hydrolysis activity"/>
    <property type="evidence" value="ECO:0007669"/>
    <property type="project" value="InterPro"/>
</dbReference>
<dbReference type="GO" id="GO:1901612">
    <property type="term" value="F:cardiolipin binding"/>
    <property type="evidence" value="ECO:0000314"/>
    <property type="project" value="UniProtKB"/>
</dbReference>
<dbReference type="GO" id="GO:0005319">
    <property type="term" value="F:lipid transporter activity"/>
    <property type="evidence" value="ECO:0000315"/>
    <property type="project" value="MGI"/>
</dbReference>
<dbReference type="GO" id="GO:0000287">
    <property type="term" value="F:magnesium ion binding"/>
    <property type="evidence" value="ECO:0007669"/>
    <property type="project" value="InterPro"/>
</dbReference>
<dbReference type="GO" id="GO:0140345">
    <property type="term" value="F:phosphatidylcholine flippase activity"/>
    <property type="evidence" value="ECO:0007669"/>
    <property type="project" value="Ensembl"/>
</dbReference>
<dbReference type="GO" id="GO:0090554">
    <property type="term" value="F:phosphatidylcholine floppase activity"/>
    <property type="evidence" value="ECO:0007669"/>
    <property type="project" value="RHEA"/>
</dbReference>
<dbReference type="GO" id="GO:0140346">
    <property type="term" value="F:phosphatidylserine flippase activity"/>
    <property type="evidence" value="ECO:0000250"/>
    <property type="project" value="UniProtKB"/>
</dbReference>
<dbReference type="GO" id="GO:0090556">
    <property type="term" value="F:phosphatidylserine floppase activity"/>
    <property type="evidence" value="ECO:0007669"/>
    <property type="project" value="RHEA"/>
</dbReference>
<dbReference type="GO" id="GO:0015917">
    <property type="term" value="P:aminophospholipid transport"/>
    <property type="evidence" value="ECO:0000314"/>
    <property type="project" value="BHF-UCL"/>
</dbReference>
<dbReference type="GO" id="GO:0045176">
    <property type="term" value="P:apical protein localization"/>
    <property type="evidence" value="ECO:0000250"/>
    <property type="project" value="UniProtKB"/>
</dbReference>
<dbReference type="GO" id="GO:0015721">
    <property type="term" value="P:bile acid and bile salt transport"/>
    <property type="evidence" value="ECO:0000315"/>
    <property type="project" value="UniProtKB"/>
</dbReference>
<dbReference type="GO" id="GO:0008206">
    <property type="term" value="P:bile acid metabolic process"/>
    <property type="evidence" value="ECO:0000315"/>
    <property type="project" value="MGI"/>
</dbReference>
<dbReference type="GO" id="GO:0060119">
    <property type="term" value="P:inner ear receptor cell development"/>
    <property type="evidence" value="ECO:0000315"/>
    <property type="project" value="UniProtKB"/>
</dbReference>
<dbReference type="GO" id="GO:0045892">
    <property type="term" value="P:negative regulation of DNA-templated transcription"/>
    <property type="evidence" value="ECO:0007669"/>
    <property type="project" value="Ensembl"/>
</dbReference>
<dbReference type="GO" id="GO:0015711">
    <property type="term" value="P:organic anion transport"/>
    <property type="evidence" value="ECO:0000315"/>
    <property type="project" value="UniProtKB"/>
</dbReference>
<dbReference type="GO" id="GO:2001225">
    <property type="term" value="P:regulation of chloride transport"/>
    <property type="evidence" value="ECO:0000250"/>
    <property type="project" value="UniProtKB"/>
</dbReference>
<dbReference type="GO" id="GO:0032534">
    <property type="term" value="P:regulation of microvillus assembly"/>
    <property type="evidence" value="ECO:0007669"/>
    <property type="project" value="Ensembl"/>
</dbReference>
<dbReference type="GO" id="GO:1903729">
    <property type="term" value="P:regulation of plasma membrane organization"/>
    <property type="evidence" value="ECO:0000315"/>
    <property type="project" value="UniProtKB"/>
</dbReference>
<dbReference type="GO" id="GO:0007605">
    <property type="term" value="P:sensory perception of sound"/>
    <property type="evidence" value="ECO:0000315"/>
    <property type="project" value="UniProtKB"/>
</dbReference>
<dbReference type="GO" id="GO:0021650">
    <property type="term" value="P:vestibulocochlear nerve formation"/>
    <property type="evidence" value="ECO:0000315"/>
    <property type="project" value="UniProtKB"/>
</dbReference>
<dbReference type="GO" id="GO:0006855">
    <property type="term" value="P:xenobiotic transmembrane transport"/>
    <property type="evidence" value="ECO:0007669"/>
    <property type="project" value="Ensembl"/>
</dbReference>
<dbReference type="CDD" id="cd02073">
    <property type="entry name" value="P-type_ATPase_APLT_Dnf-like"/>
    <property type="match status" value="1"/>
</dbReference>
<dbReference type="FunFam" id="3.40.1110.10:FF:000012">
    <property type="entry name" value="Phospholipid-transporting ATPase"/>
    <property type="match status" value="1"/>
</dbReference>
<dbReference type="FunFam" id="3.40.50.1000:FF:000001">
    <property type="entry name" value="Phospholipid-transporting ATPase IC"/>
    <property type="match status" value="1"/>
</dbReference>
<dbReference type="Gene3D" id="3.40.1110.10">
    <property type="entry name" value="Calcium-transporting ATPase, cytoplasmic domain N"/>
    <property type="match status" value="1"/>
</dbReference>
<dbReference type="Gene3D" id="2.70.150.10">
    <property type="entry name" value="Calcium-transporting ATPase, cytoplasmic transduction domain A"/>
    <property type="match status" value="1"/>
</dbReference>
<dbReference type="Gene3D" id="3.40.50.1000">
    <property type="entry name" value="HAD superfamily/HAD-like"/>
    <property type="match status" value="1"/>
</dbReference>
<dbReference type="InterPro" id="IPR023299">
    <property type="entry name" value="ATPase_P-typ_cyto_dom_N"/>
</dbReference>
<dbReference type="InterPro" id="IPR018303">
    <property type="entry name" value="ATPase_P-typ_P_site"/>
</dbReference>
<dbReference type="InterPro" id="IPR023298">
    <property type="entry name" value="ATPase_P-typ_TM_dom_sf"/>
</dbReference>
<dbReference type="InterPro" id="IPR008250">
    <property type="entry name" value="ATPase_P-typ_transduc_dom_A_sf"/>
</dbReference>
<dbReference type="InterPro" id="IPR036412">
    <property type="entry name" value="HAD-like_sf"/>
</dbReference>
<dbReference type="InterPro" id="IPR023214">
    <property type="entry name" value="HAD_sf"/>
</dbReference>
<dbReference type="InterPro" id="IPR006539">
    <property type="entry name" value="P-type_ATPase_IV"/>
</dbReference>
<dbReference type="InterPro" id="IPR032631">
    <property type="entry name" value="P-type_ATPase_N"/>
</dbReference>
<dbReference type="InterPro" id="IPR001757">
    <property type="entry name" value="P_typ_ATPase"/>
</dbReference>
<dbReference type="InterPro" id="IPR032630">
    <property type="entry name" value="P_typ_ATPase_c"/>
</dbReference>
<dbReference type="InterPro" id="IPR044492">
    <property type="entry name" value="P_typ_ATPase_HD_dom"/>
</dbReference>
<dbReference type="NCBIfam" id="TIGR01652">
    <property type="entry name" value="ATPase-Plipid"/>
    <property type="match status" value="1"/>
</dbReference>
<dbReference type="NCBIfam" id="TIGR01494">
    <property type="entry name" value="ATPase_P-type"/>
    <property type="match status" value="1"/>
</dbReference>
<dbReference type="PANTHER" id="PTHR24092:SF48">
    <property type="entry name" value="PHOSPHOLIPID-TRANSPORTING ATPASE IC"/>
    <property type="match status" value="1"/>
</dbReference>
<dbReference type="PANTHER" id="PTHR24092">
    <property type="entry name" value="PROBABLE PHOSPHOLIPID-TRANSPORTING ATPASE"/>
    <property type="match status" value="1"/>
</dbReference>
<dbReference type="Pfam" id="PF13246">
    <property type="entry name" value="Cation_ATPase"/>
    <property type="match status" value="1"/>
</dbReference>
<dbReference type="Pfam" id="PF00122">
    <property type="entry name" value="E1-E2_ATPase"/>
    <property type="match status" value="1"/>
</dbReference>
<dbReference type="Pfam" id="PF16212">
    <property type="entry name" value="PhoLip_ATPase_C"/>
    <property type="match status" value="1"/>
</dbReference>
<dbReference type="Pfam" id="PF16209">
    <property type="entry name" value="PhoLip_ATPase_N"/>
    <property type="match status" value="1"/>
</dbReference>
<dbReference type="PRINTS" id="PR00119">
    <property type="entry name" value="CATATPASE"/>
</dbReference>
<dbReference type="SFLD" id="SFLDS00003">
    <property type="entry name" value="Haloacid_Dehalogenase"/>
    <property type="match status" value="1"/>
</dbReference>
<dbReference type="SFLD" id="SFLDF00027">
    <property type="entry name" value="p-type_atpase"/>
    <property type="match status" value="1"/>
</dbReference>
<dbReference type="SUPFAM" id="SSF81653">
    <property type="entry name" value="Calcium ATPase, transduction domain A"/>
    <property type="match status" value="1"/>
</dbReference>
<dbReference type="SUPFAM" id="SSF81665">
    <property type="entry name" value="Calcium ATPase, transmembrane domain M"/>
    <property type="match status" value="1"/>
</dbReference>
<dbReference type="SUPFAM" id="SSF56784">
    <property type="entry name" value="HAD-like"/>
    <property type="match status" value="1"/>
</dbReference>
<dbReference type="SUPFAM" id="SSF81660">
    <property type="entry name" value="Metal cation-transporting ATPase, ATP-binding domain N"/>
    <property type="match status" value="1"/>
</dbReference>
<dbReference type="PROSITE" id="PS00154">
    <property type="entry name" value="ATPASE_E1_E2"/>
    <property type="match status" value="1"/>
</dbReference>
<comment type="function">
    <text evidence="1 8 9 10 11 12 13 14">Catalytic component of a P4-ATPase flippase complex which catalyzes the hydrolysis of ATP coupled to the transport of phospholipids, in particular phosphatidylcholines (PC), from the outer to the inner leaflet of the plasma membrane (By similarity). May participate in the establishment of the canalicular membrane integrity by ensuring asymmetric distribution of phospholipids in the canicular membrane (PubMed:21820390). Thus may have a role in the regulation of bile acids transport into the canaliculus, uptake of bile acids from intestinal contents into intestinal mucosa or both and protect hepatocytes from bile salts (PubMed:14976163, PubMed:20126555, PubMed:21820390). Involved in the microvillus formation in polarized epithelial cells; the function seems to be independent from its flippase activity (By similarity). Participates in correct apical membrane localization of CDC42, CFTR and SLC10A2 (PubMed:26416959). Enables CDC42 clustering at the apical membrane during enterocyte polarization through the interaction between CDC42 polybasic region and negatively charged membrane lipids provided by ATP8B1 (PubMed:26416959). Together with TMEM30A is involved in uptake of the synthetic drug alkylphospholipid perifosine (By similarity). Required for the preservation of cochlear hair cells in the inner ear (PubMed:19478059). According PubMed:20852622 is proposed to act as cardiolipin transporter during inflammatory injury; the function is questioned by PubMed:21475228 (PubMed:20852622, PubMed:21475228).</text>
</comment>
<comment type="catalytic activity">
    <reaction evidence="1">
        <text>ATP + H2O + phospholipidSide 1 = ADP + phosphate + phospholipidSide 2.</text>
        <dbReference type="EC" id="7.6.2.1"/>
    </reaction>
</comment>
<comment type="catalytic activity">
    <reaction evidence="1">
        <text>a 1,2-diacyl-sn-glycero-3-phosphocholine(out) + ATP + H2O = a 1,2-diacyl-sn-glycero-3-phosphocholine(in) + ADP + phosphate + H(+)</text>
        <dbReference type="Rhea" id="RHEA:38583"/>
        <dbReference type="ChEBI" id="CHEBI:15377"/>
        <dbReference type="ChEBI" id="CHEBI:15378"/>
        <dbReference type="ChEBI" id="CHEBI:30616"/>
        <dbReference type="ChEBI" id="CHEBI:43474"/>
        <dbReference type="ChEBI" id="CHEBI:57643"/>
        <dbReference type="ChEBI" id="CHEBI:456216"/>
    </reaction>
    <physiologicalReaction direction="left-to-right" evidence="1">
        <dbReference type="Rhea" id="RHEA:38584"/>
    </physiologicalReaction>
</comment>
<comment type="catalytic activity">
    <reaction evidence="1">
        <text>a 1,2-diacyl-sn-glycero-3-phospho-L-serine(out) + ATP + H2O = a 1,2-diacyl-sn-glycero-3-phospho-L-serine(in) + ADP + phosphate + H(+)</text>
        <dbReference type="Rhea" id="RHEA:38567"/>
        <dbReference type="ChEBI" id="CHEBI:15377"/>
        <dbReference type="ChEBI" id="CHEBI:15378"/>
        <dbReference type="ChEBI" id="CHEBI:30616"/>
        <dbReference type="ChEBI" id="CHEBI:43474"/>
        <dbReference type="ChEBI" id="CHEBI:57262"/>
        <dbReference type="ChEBI" id="CHEBI:456216"/>
    </reaction>
    <physiologicalReaction direction="left-to-right" evidence="1">
        <dbReference type="Rhea" id="RHEA:38568"/>
    </physiologicalReaction>
</comment>
<comment type="cofactor">
    <cofactor evidence="5">
        <name>Mg(2+)</name>
        <dbReference type="ChEBI" id="CHEBI:18420"/>
    </cofactor>
</comment>
<comment type="subunit">
    <text evidence="1 15">Component of a P4-ATPase flippase complex which consists of a catalytic alpha subunit ATP8B1 and an accessory beta subunit TMEM30A (PubMed:30018401). The flippase ATP8B1:TMEM30A complex can form an intermediate phosphoenzyme in vitro. Also interacts with beta subunit TMEM30B.</text>
</comment>
<comment type="subcellular location">
    <subcellularLocation>
        <location evidence="11">Cell membrane</location>
        <topology evidence="11">Multi-pass membrane protein</topology>
    </subcellularLocation>
    <subcellularLocation>
        <location evidence="14">Apical cell membrane</location>
    </subcellularLocation>
    <subcellularLocation>
        <location evidence="11">Cell projection</location>
        <location evidence="11">Stereocilium</location>
    </subcellularLocation>
    <subcellularLocation>
        <location evidence="1">Endoplasmic reticulum</location>
    </subcellularLocation>
    <subcellularLocation>
        <location evidence="1">Golgi apparatus</location>
    </subcellularLocation>
    <text evidence="1">Exit from the endoplasmic reticulum requires the presence of TMEM30A or TMEM30B. Localizes to apical membranes in epithelial cells.</text>
</comment>
<comment type="tissue specificity">
    <text evidence="8 15">Hepatocytes, bile duct, intestinal epithelial cells (cholangiocytes and ileocytes), and pancreatic acinar cells.</text>
</comment>
<comment type="disruption phenotype">
    <text evidence="8 10">Mice have unimpaired bile secretion, and no liver damage, but show mild abnormalities including depressed weight at weaning and elevated serum bile salt levels. Do not suffer from jaundice or diarrhea and have normal serum bilirubin levels and normal liver enzyme activities, except for mildly elevated serum AST (aspartate aminotransferase) activity. Display unimpaired transhepatic bile salt transport and are resistant to bile salt-induced cholestasis. Upon bile salt feeding, demonstrate serum bile salt accumulation, hepatic injury and expansion of the systemic bile salt pool and this failure of bile salt homeostasis occurs in the absence of any defect in hepatic bile secretion (PubMed:14976163). Mutant mice with B6 background show greater abnormalities than 129 and/or F1 background ones. Pups of B6 background gain less weight. In adult B6 background has lower serum cholesterol levels, higher serum alkaline phosphatase levels, and larger livers. After challenge with cholate-supplemented diet, these mice exhibit higher serum alkaline phosphatase and bilirubin levels, greater weight loss and larger livers (PubMed:20126555).</text>
</comment>
<comment type="similarity">
    <text evidence="16">Belongs to the cation transport ATPase (P-type) (TC 3.A.3) family. Type IV subfamily.</text>
</comment>
<sequence length="1251" mass="143798">MSTERDSETTFDEESQPNDEVVPYSDDETEDELEDQGSTVEPEQNRVNREAEKKRETFRKDCTWQVKANDRKFHEQPHFMNTKFFCIKESKYASNAIKTYKYNGFTFLPMNLFEQFKRAANFYFLILLILQAIPQISTLAWYTTLVPLLLVLGITAIKDLVDDVARHKMDKEINNRTCEVIKDGRFKIIKWKDIQVGDVIRLKKNDFIPADILLLSSSEPNSLCYVETAELDGETNLKFKMALEITDQYLQIEDNLATFDGFIECEEPNNRLDKFTGTLFWKNQSFPLDADKILLRGCVIRNTDVCHGLVIFAGADTKIMKNSGKTRFKRTKIDYLMNYMVYTIFIVLILVSAGLAIGHAYWEAQVGNYSWYLYDGENATPSYRGFLNFWGYIIVLNTMVPISLYVSVEVIRLGQSHFINWDLQMYYAEKDTPAKARTTTLNEQLGQIHYIFSDKTGTLTQNIMTFKKCCINGTIYGDHRDASQHSHSKIELVDFSWNTFADGKLAFYDHYLIEQIQSGKEPEVRQFFFLLSICHTVMVDRIDGQINYQAASPDEGALVNAARNFGFAFLARTQNTITVSELGSERTYNVLAILDFNSDRKRMSIIVRTPEGSIRLYCKGADTVIYERLHRMNPTKQETQDALDIFASETLRTLCLCYKEIEEKEFTEWNNKFMAASVASSNRDEALDKVYEEIEKDLILLGATAIEDKLQDGVPETISKLAKADIKIWVLTGDKKETAENIGFACELLTEDTTICYGEDINSLLHTRMENQRNRGGVSAKFAPPVYEPFFPPGENRALIITGSWLNEILLEKKTKRSKILKLKFPRTEEERRMRSQSRRRLEEKKEQRQKNFVDLACECSAVICCRVTPKQKAMVVDLVKRYKKAITLAIGDGANDVNMIKTAHIGVGISGQEGMQAVMSSDYSFAQFRYLQRLLLVHGRWSYIRMCKFLRYFFYKNFAFTLVHFWYSFFNGYSAQTAYEDWFITLYNVLYSSLPVLLMGLLDQDVSDKLSLRFPGLYVVGQRDLLFNYKRFFVSLLHGVLTSMVLFFIPLGAYLQTVGQDGEAPSDYQSFAVTVASALVITVNFQIGLDTSYWTFVNAFSIFGSIALYFGIMFDFHSAGIHVLFPSAFQFTGTASNALRQPYIWLTIILTVAVCLLPVVAIRFLSMTIWPSESDKIQKHRKRLKAEEQWKRRQSVFRRGVSSRRSAYAFSHQRGYADLISSGRSIRKKRSPLDAIIADGTAEYRRTVES</sequence>
<reference key="1">
    <citation type="journal article" date="2004" name="Hum. Mol. Genet.">
        <title>A mouse genetic model for familial cholestasis caused by ATP8B1 mutations reveals perturbed bile salt homeostasis but no impairment in bile secretion.</title>
        <authorList>
            <person name="Pawlikowska L."/>
            <person name="Groen A."/>
            <person name="Eppens E.F."/>
            <person name="Kunne C."/>
            <person name="Ottenhoff R."/>
            <person name="Looije N."/>
            <person name="Knisely A.S."/>
            <person name="Killeen N.P."/>
            <person name="Bull L.N."/>
            <person name="Elferink R.P.J.O."/>
            <person name="Freimer N.B."/>
        </authorList>
    </citation>
    <scope>NUCLEOTIDE SEQUENCE [MRNA]</scope>
    <scope>FUNCTION</scope>
    <scope>TISSUE SPECIFICITY</scope>
    <scope>DISRUPTION PHENOTYPE</scope>
    <source>
        <strain>129</strain>
    </source>
</reference>
<reference key="2">
    <citation type="journal article" date="2005" name="Science">
        <title>The transcriptional landscape of the mammalian genome.</title>
        <authorList>
            <person name="Carninci P."/>
            <person name="Kasukawa T."/>
            <person name="Katayama S."/>
            <person name="Gough J."/>
            <person name="Frith M.C."/>
            <person name="Maeda N."/>
            <person name="Oyama R."/>
            <person name="Ravasi T."/>
            <person name="Lenhard B."/>
            <person name="Wells C."/>
            <person name="Kodzius R."/>
            <person name="Shimokawa K."/>
            <person name="Bajic V.B."/>
            <person name="Brenner S.E."/>
            <person name="Batalov S."/>
            <person name="Forrest A.R."/>
            <person name="Zavolan M."/>
            <person name="Davis M.J."/>
            <person name="Wilming L.G."/>
            <person name="Aidinis V."/>
            <person name="Allen J.E."/>
            <person name="Ambesi-Impiombato A."/>
            <person name="Apweiler R."/>
            <person name="Aturaliya R.N."/>
            <person name="Bailey T.L."/>
            <person name="Bansal M."/>
            <person name="Baxter L."/>
            <person name="Beisel K.W."/>
            <person name="Bersano T."/>
            <person name="Bono H."/>
            <person name="Chalk A.M."/>
            <person name="Chiu K.P."/>
            <person name="Choudhary V."/>
            <person name="Christoffels A."/>
            <person name="Clutterbuck D.R."/>
            <person name="Crowe M.L."/>
            <person name="Dalla E."/>
            <person name="Dalrymple B.P."/>
            <person name="de Bono B."/>
            <person name="Della Gatta G."/>
            <person name="di Bernardo D."/>
            <person name="Down T."/>
            <person name="Engstrom P."/>
            <person name="Fagiolini M."/>
            <person name="Faulkner G."/>
            <person name="Fletcher C.F."/>
            <person name="Fukushima T."/>
            <person name="Furuno M."/>
            <person name="Futaki S."/>
            <person name="Gariboldi M."/>
            <person name="Georgii-Hemming P."/>
            <person name="Gingeras T.R."/>
            <person name="Gojobori T."/>
            <person name="Green R.E."/>
            <person name="Gustincich S."/>
            <person name="Harbers M."/>
            <person name="Hayashi Y."/>
            <person name="Hensch T.K."/>
            <person name="Hirokawa N."/>
            <person name="Hill D."/>
            <person name="Huminiecki L."/>
            <person name="Iacono M."/>
            <person name="Ikeo K."/>
            <person name="Iwama A."/>
            <person name="Ishikawa T."/>
            <person name="Jakt M."/>
            <person name="Kanapin A."/>
            <person name="Katoh M."/>
            <person name="Kawasawa Y."/>
            <person name="Kelso J."/>
            <person name="Kitamura H."/>
            <person name="Kitano H."/>
            <person name="Kollias G."/>
            <person name="Krishnan S.P."/>
            <person name="Kruger A."/>
            <person name="Kummerfeld S.K."/>
            <person name="Kurochkin I.V."/>
            <person name="Lareau L.F."/>
            <person name="Lazarevic D."/>
            <person name="Lipovich L."/>
            <person name="Liu J."/>
            <person name="Liuni S."/>
            <person name="McWilliam S."/>
            <person name="Madan Babu M."/>
            <person name="Madera M."/>
            <person name="Marchionni L."/>
            <person name="Matsuda H."/>
            <person name="Matsuzawa S."/>
            <person name="Miki H."/>
            <person name="Mignone F."/>
            <person name="Miyake S."/>
            <person name="Morris K."/>
            <person name="Mottagui-Tabar S."/>
            <person name="Mulder N."/>
            <person name="Nakano N."/>
            <person name="Nakauchi H."/>
            <person name="Ng P."/>
            <person name="Nilsson R."/>
            <person name="Nishiguchi S."/>
            <person name="Nishikawa S."/>
            <person name="Nori F."/>
            <person name="Ohara O."/>
            <person name="Okazaki Y."/>
            <person name="Orlando V."/>
            <person name="Pang K.C."/>
            <person name="Pavan W.J."/>
            <person name="Pavesi G."/>
            <person name="Pesole G."/>
            <person name="Petrovsky N."/>
            <person name="Piazza S."/>
            <person name="Reed J."/>
            <person name="Reid J.F."/>
            <person name="Ring B.Z."/>
            <person name="Ringwald M."/>
            <person name="Rost B."/>
            <person name="Ruan Y."/>
            <person name="Salzberg S.L."/>
            <person name="Sandelin A."/>
            <person name="Schneider C."/>
            <person name="Schoenbach C."/>
            <person name="Sekiguchi K."/>
            <person name="Semple C.A."/>
            <person name="Seno S."/>
            <person name="Sessa L."/>
            <person name="Sheng Y."/>
            <person name="Shibata Y."/>
            <person name="Shimada H."/>
            <person name="Shimada K."/>
            <person name="Silva D."/>
            <person name="Sinclair B."/>
            <person name="Sperling S."/>
            <person name="Stupka E."/>
            <person name="Sugiura K."/>
            <person name="Sultana R."/>
            <person name="Takenaka Y."/>
            <person name="Taki K."/>
            <person name="Tammoja K."/>
            <person name="Tan S.L."/>
            <person name="Tang S."/>
            <person name="Taylor M.S."/>
            <person name="Tegner J."/>
            <person name="Teichmann S.A."/>
            <person name="Ueda H.R."/>
            <person name="van Nimwegen E."/>
            <person name="Verardo R."/>
            <person name="Wei C.L."/>
            <person name="Yagi K."/>
            <person name="Yamanishi H."/>
            <person name="Zabarovsky E."/>
            <person name="Zhu S."/>
            <person name="Zimmer A."/>
            <person name="Hide W."/>
            <person name="Bult C."/>
            <person name="Grimmond S.M."/>
            <person name="Teasdale R.D."/>
            <person name="Liu E.T."/>
            <person name="Brusic V."/>
            <person name="Quackenbush J."/>
            <person name="Wahlestedt C."/>
            <person name="Mattick J.S."/>
            <person name="Hume D.A."/>
            <person name="Kai C."/>
            <person name="Sasaki D."/>
            <person name="Tomaru Y."/>
            <person name="Fukuda S."/>
            <person name="Kanamori-Katayama M."/>
            <person name="Suzuki M."/>
            <person name="Aoki J."/>
            <person name="Arakawa T."/>
            <person name="Iida J."/>
            <person name="Imamura K."/>
            <person name="Itoh M."/>
            <person name="Kato T."/>
            <person name="Kawaji H."/>
            <person name="Kawagashira N."/>
            <person name="Kawashima T."/>
            <person name="Kojima M."/>
            <person name="Kondo S."/>
            <person name="Konno H."/>
            <person name="Nakano K."/>
            <person name="Ninomiya N."/>
            <person name="Nishio T."/>
            <person name="Okada M."/>
            <person name="Plessy C."/>
            <person name="Shibata K."/>
            <person name="Shiraki T."/>
            <person name="Suzuki S."/>
            <person name="Tagami M."/>
            <person name="Waki K."/>
            <person name="Watahiki A."/>
            <person name="Okamura-Oho Y."/>
            <person name="Suzuki H."/>
            <person name="Kawai J."/>
            <person name="Hayashizaki Y."/>
        </authorList>
    </citation>
    <scope>NUCLEOTIDE SEQUENCE [LARGE SCALE MRNA]</scope>
    <source>
        <strain>NOD</strain>
    </source>
</reference>
<reference key="3">
    <citation type="journal article" date="2004" name="Genome Res.">
        <title>The status, quality, and expansion of the NIH full-length cDNA project: the Mammalian Gene Collection (MGC).</title>
        <authorList>
            <consortium name="The MGC Project Team"/>
        </authorList>
    </citation>
    <scope>NUCLEOTIDE SEQUENCE [LARGE SCALE MRNA]</scope>
</reference>
<reference key="4">
    <citation type="journal article" date="2007" name="Proc. Natl. Acad. Sci. U.S.A.">
        <title>Large-scale phosphorylation analysis of mouse liver.</title>
        <authorList>
            <person name="Villen J."/>
            <person name="Beausoleil S.A."/>
            <person name="Gerber S.A."/>
            <person name="Gygi S.P."/>
        </authorList>
    </citation>
    <scope>PHOSPHORYLATION [LARGE SCALE ANALYSIS] AT SER-1223</scope>
    <scope>IDENTIFICATION BY MASS SPECTROMETRY [LARGE SCALE ANALYSIS]</scope>
    <source>
        <tissue>Liver</tissue>
    </source>
</reference>
<reference key="5">
    <citation type="journal article" date="2009" name="Proc. Natl. Acad. Sci. U.S.A.">
        <title>ATP8B1 is essential for maintaining normal hearing.</title>
        <authorList>
            <person name="Stapelbroek J.M."/>
            <person name="Peters T.A."/>
            <person name="van Beurden D.H."/>
            <person name="Curfs J.H."/>
            <person name="Joosten A."/>
            <person name="Beynon A.J."/>
            <person name="van Leeuwen B.M."/>
            <person name="van der Velden L.M."/>
            <person name="Bull L."/>
            <person name="Oude Elferink R.P."/>
            <person name="van Zanten B.A."/>
            <person name="Klomp L.W."/>
            <person name="Houwen R.H."/>
        </authorList>
    </citation>
    <scope>FUNCTION</scope>
    <scope>MUTAGENESIS OF GLY-308</scope>
</reference>
<reference key="6">
    <citation type="journal article" date="2010" name="Cell">
        <title>A tissue-specific atlas of mouse protein phosphorylation and expression.</title>
        <authorList>
            <person name="Huttlin E.L."/>
            <person name="Jedrychowski M.P."/>
            <person name="Elias J.E."/>
            <person name="Goswami T."/>
            <person name="Rad R."/>
            <person name="Beausoleil S.A."/>
            <person name="Villen J."/>
            <person name="Haas W."/>
            <person name="Sowa M.E."/>
            <person name="Gygi S.P."/>
        </authorList>
    </citation>
    <scope>PHOSPHORYLATION [LARGE SCALE ANALYSIS] AT SER-1223</scope>
    <scope>IDENTIFICATION BY MASS SPECTROMETRY [LARGE SCALE ANALYSIS]</scope>
    <source>
        <tissue>Liver</tissue>
        <tissue>Pancreas</tissue>
    </source>
</reference>
<reference key="7">
    <citation type="journal article" date="2010" name="Nat. Med.">
        <title>Dynamic regulation of cardiolipin by the lipid pump Atp8b1 determines the severity of lung injury in experimental pneumonia.</title>
        <authorList>
            <person name="Ray N.B."/>
            <person name="Durairaj L."/>
            <person name="Chen B.B."/>
            <person name="McVerry B.J."/>
            <person name="Ryan A.J."/>
            <person name="Donahoe M."/>
            <person name="Waltenbaugh A.K."/>
            <person name="O'Donnell C.P."/>
            <person name="Henderson F.C."/>
            <person name="Etscheidt C.A."/>
            <person name="McCoy D.M."/>
            <person name="Agassandian M."/>
            <person name="Hayes-Rowan E.C."/>
            <person name="Coon T.A."/>
            <person name="Butler P.L."/>
            <person name="Gakhar L."/>
            <person name="Mathur S.N."/>
            <person name="Sieren J.C."/>
            <person name="Tyurina Y.Y."/>
            <person name="Kagan V.E."/>
            <person name="McLennan G."/>
            <person name="Mallampalli R.K."/>
        </authorList>
    </citation>
    <scope>FUNCTION</scope>
    <scope>SUBCELLULAR LOCATION</scope>
</reference>
<reference key="8">
    <citation type="journal article" date="2010" name="PLoS ONE">
        <title>Strain background modifies phenotypes in the ATP8B1-deficient mouse.</title>
        <authorList>
            <person name="Shah S."/>
            <person name="Sanford U.R."/>
            <person name="Vargas J.C."/>
            <person name="Xu H."/>
            <person name="Groen A."/>
            <person name="Paulusma C.C."/>
            <person name="Grenert J.P."/>
            <person name="Pawlikowska L."/>
            <person name="Sen S."/>
            <person name="Elferink R.P."/>
            <person name="Bull L.N."/>
        </authorList>
    </citation>
    <scope>DISRUPTION PHENOTYPE</scope>
    <scope>FUNCTION</scope>
</reference>
<reference key="9">
    <citation type="journal article" date="2011" name="Gastroenterology">
        <title>Complementary functions of the flippase ATP8B1 and the floppase ABCB4 in maintaining canalicular membrane integrity.</title>
        <authorList>
            <person name="Groen A."/>
            <person name="Romero M.R."/>
            <person name="Kunne C."/>
            <person name="Hoosdally S.J."/>
            <person name="Dixon P.H."/>
            <person name="Wooding C."/>
            <person name="Williamson C."/>
            <person name="Seppen J."/>
            <person name="Van den Oever K."/>
            <person name="Mok K.S."/>
            <person name="Paulusma C.C."/>
            <person name="Linton K.J."/>
            <person name="Oude Elferink R.P."/>
        </authorList>
    </citation>
    <scope>FUNCTION</scope>
</reference>
<reference key="10">
    <citation type="journal article" date="2011" name="Nat. Med.">
        <title>The flip side of cardiolipin import.</title>
        <authorList>
            <person name="Paulusma C.C."/>
            <person name="Houwen R.H."/>
            <person name="Williamson P.L."/>
        </authorList>
    </citation>
    <scope>FUNCTION</scope>
</reference>
<reference key="11">
    <citation type="journal article" date="2015" name="J. Cell Biol.">
        <title>ATP8B1-mediated spatial organization of Cdc42 signaling maintains singularity during enterocyte polarization.</title>
        <authorList>
            <person name="Bruurs L.J."/>
            <person name="Donker L."/>
            <person name="Zwakenberg S."/>
            <person name="Zwartkruis F.J."/>
            <person name="Begthel H."/>
            <person name="Knisely A.S."/>
            <person name="Posthuma G."/>
            <person name="van de Graaf S.F."/>
            <person name="Paulusma C.C."/>
            <person name="Bos J.L."/>
        </authorList>
    </citation>
    <scope>SUBCELLULAR LOCATION</scope>
    <scope>FUNCTION</scope>
</reference>
<reference key="12">
    <citation type="journal article" date="2018" name="Sci. Rep.">
        <title>Proteomic Analysis and Functional Characterization of P4-ATPase Phospholipid Flippases from Murine Tissues.</title>
        <authorList>
            <person name="Wang J."/>
            <person name="Molday L.L."/>
            <person name="Hii T."/>
            <person name="Coleman J.A."/>
            <person name="Wen T."/>
            <person name="Andersen J.P."/>
            <person name="Molday R.S."/>
        </authorList>
    </citation>
    <scope>INTERACTION WITH TMEM30A</scope>
    <scope>IDENTIFICATION BY MASS SPECTROMETRY</scope>
    <scope>TISSUE SPECIFICITY</scope>
</reference>
<feature type="chain" id="PRO_0000370862" description="Phospholipid-transporting ATPase IC">
    <location>
        <begin position="1"/>
        <end position="1251"/>
    </location>
</feature>
<feature type="topological domain" description="Cytoplasmic" evidence="6">
    <location>
        <begin position="1"/>
        <end position="121"/>
    </location>
</feature>
<feature type="transmembrane region" description="Helical" evidence="6">
    <location>
        <begin position="122"/>
        <end position="142"/>
    </location>
</feature>
<feature type="topological domain" description="Exoplasmic loop" evidence="6">
    <location>
        <begin position="143"/>
        <end position="144"/>
    </location>
</feature>
<feature type="transmembrane region" description="Helical" evidence="6">
    <location>
        <begin position="145"/>
        <end position="165"/>
    </location>
</feature>
<feature type="topological domain" description="Cytoplasmic" evidence="6">
    <location>
        <begin position="166"/>
        <end position="339"/>
    </location>
</feature>
<feature type="transmembrane region" description="Helical" evidence="6">
    <location>
        <begin position="340"/>
        <end position="360"/>
    </location>
</feature>
<feature type="topological domain" description="Exoplasmic loop" evidence="6">
    <location>
        <begin position="361"/>
        <end position="385"/>
    </location>
</feature>
<feature type="transmembrane region" description="Helical" evidence="6">
    <location>
        <begin position="386"/>
        <end position="406"/>
    </location>
</feature>
<feature type="topological domain" description="Cytoplasmic" evidence="6">
    <location>
        <begin position="407"/>
        <end position="952"/>
    </location>
</feature>
<feature type="transmembrane region" description="Helical" evidence="6">
    <location>
        <begin position="953"/>
        <end position="973"/>
    </location>
</feature>
<feature type="topological domain" description="Exoplasmic loop" evidence="6">
    <location>
        <begin position="974"/>
        <end position="982"/>
    </location>
</feature>
<feature type="transmembrane region" description="Helical" evidence="6">
    <location>
        <begin position="983"/>
        <end position="1003"/>
    </location>
</feature>
<feature type="topological domain" description="Cytoplasmic" evidence="6">
    <location>
        <begin position="1004"/>
        <end position="1032"/>
    </location>
</feature>
<feature type="transmembrane region" description="Helical" evidence="6">
    <location>
        <begin position="1033"/>
        <end position="1053"/>
    </location>
</feature>
<feature type="topological domain" description="Exoplasmic loop" evidence="6">
    <location>
        <begin position="1054"/>
        <end position="1071"/>
    </location>
</feature>
<feature type="transmembrane region" description="Helical" evidence="6">
    <location>
        <begin position="1072"/>
        <end position="1092"/>
    </location>
</feature>
<feature type="topological domain" description="Cytoplasmic" evidence="6">
    <location>
        <begin position="1093"/>
        <end position="1094"/>
    </location>
</feature>
<feature type="transmembrane region" description="Helical" evidence="6">
    <location>
        <begin position="1095"/>
        <end position="1115"/>
    </location>
</feature>
<feature type="topological domain" description="Exoplasmic loop" evidence="6">
    <location>
        <begin position="1116"/>
        <end position="1142"/>
    </location>
</feature>
<feature type="transmembrane region" description="Helical" evidence="6">
    <location>
        <begin position="1143"/>
        <end position="1163"/>
    </location>
</feature>
<feature type="topological domain" description="Cytoplasmic" evidence="6">
    <location>
        <begin position="1164"/>
        <end position="1251"/>
    </location>
</feature>
<feature type="region of interest" description="Disordered" evidence="7">
    <location>
        <begin position="1"/>
        <end position="52"/>
    </location>
</feature>
<feature type="compositionally biased region" description="Acidic residues" evidence="7">
    <location>
        <begin position="25"/>
        <end position="35"/>
    </location>
</feature>
<feature type="compositionally biased region" description="Basic and acidic residues" evidence="7">
    <location>
        <begin position="43"/>
        <end position="52"/>
    </location>
</feature>
<feature type="active site" description="4-aspartylphosphate intermediate" evidence="4">
    <location>
        <position position="454"/>
    </location>
</feature>
<feature type="binding site" evidence="5">
    <location>
        <position position="454"/>
    </location>
    <ligand>
        <name>ATP</name>
        <dbReference type="ChEBI" id="CHEBI:30616"/>
    </ligand>
</feature>
<feature type="binding site" evidence="5">
    <location>
        <position position="454"/>
    </location>
    <ligand>
        <name>Mg(2+)</name>
        <dbReference type="ChEBI" id="CHEBI:18420"/>
    </ligand>
</feature>
<feature type="binding site" evidence="5">
    <location>
        <position position="455"/>
    </location>
    <ligand>
        <name>ATP</name>
        <dbReference type="ChEBI" id="CHEBI:30616"/>
    </ligand>
</feature>
<feature type="binding site" evidence="5">
    <location>
        <position position="456"/>
    </location>
    <ligand>
        <name>ATP</name>
        <dbReference type="ChEBI" id="CHEBI:30616"/>
    </ligand>
</feature>
<feature type="binding site" evidence="5">
    <location>
        <position position="456"/>
    </location>
    <ligand>
        <name>Mg(2+)</name>
        <dbReference type="ChEBI" id="CHEBI:18420"/>
    </ligand>
</feature>
<feature type="binding site" evidence="2">
    <location>
        <position position="555"/>
    </location>
    <ligand>
        <name>ATP</name>
        <dbReference type="ChEBI" id="CHEBI:30616"/>
    </ligand>
</feature>
<feature type="binding site" evidence="5">
    <location>
        <position position="596"/>
    </location>
    <ligand>
        <name>ATP</name>
        <dbReference type="ChEBI" id="CHEBI:30616"/>
    </ligand>
</feature>
<feature type="binding site" evidence="2">
    <location>
        <position position="619"/>
    </location>
    <ligand>
        <name>ATP</name>
        <dbReference type="ChEBI" id="CHEBI:30616"/>
    </ligand>
</feature>
<feature type="binding site" evidence="2">
    <location>
        <position position="652"/>
    </location>
    <ligand>
        <name>ATP</name>
        <dbReference type="ChEBI" id="CHEBI:30616"/>
    </ligand>
</feature>
<feature type="binding site" evidence="2">
    <location>
        <position position="732"/>
    </location>
    <ligand>
        <name>ATP</name>
        <dbReference type="ChEBI" id="CHEBI:30616"/>
    </ligand>
</feature>
<feature type="binding site" evidence="2">
    <location>
        <position position="733"/>
    </location>
    <ligand>
        <name>ATP</name>
        <dbReference type="ChEBI" id="CHEBI:30616"/>
    </ligand>
</feature>
<feature type="binding site" evidence="2">
    <location>
        <position position="734"/>
    </location>
    <ligand>
        <name>ATP</name>
        <dbReference type="ChEBI" id="CHEBI:30616"/>
    </ligand>
</feature>
<feature type="binding site" evidence="2">
    <location>
        <position position="867"/>
    </location>
    <ligand>
        <name>ATP</name>
        <dbReference type="ChEBI" id="CHEBI:30616"/>
    </ligand>
</feature>
<feature type="binding site" evidence="2">
    <location>
        <position position="873"/>
    </location>
    <ligand>
        <name>ATP</name>
        <dbReference type="ChEBI" id="CHEBI:30616"/>
    </ligand>
</feature>
<feature type="binding site" evidence="3">
    <location>
        <position position="893"/>
    </location>
    <ligand>
        <name>Mg(2+)</name>
        <dbReference type="ChEBI" id="CHEBI:18420"/>
    </ligand>
</feature>
<feature type="binding site" evidence="5">
    <location>
        <position position="896"/>
    </location>
    <ligand>
        <name>ATP</name>
        <dbReference type="ChEBI" id="CHEBI:30616"/>
    </ligand>
</feature>
<feature type="binding site" evidence="5">
    <location>
        <position position="897"/>
    </location>
    <ligand>
        <name>ATP</name>
        <dbReference type="ChEBI" id="CHEBI:30616"/>
    </ligand>
</feature>
<feature type="binding site" evidence="3">
    <location>
        <position position="897"/>
    </location>
    <ligand>
        <name>Mg(2+)</name>
        <dbReference type="ChEBI" id="CHEBI:18420"/>
    </ligand>
</feature>
<feature type="modified residue" description="Phosphoserine" evidence="18 19">
    <location>
        <position position="1223"/>
    </location>
</feature>
<feature type="mutagenesis site" description="Markly decreased expression, hearing loss associated with degeneration of cochlear hair cells and spiral ganglion cells." evidence="9">
    <original>G</original>
    <variation>V</variation>
    <location>
        <position position="308"/>
    </location>
</feature>
<feature type="sequence conflict" description="In Ref. 1; AAR90342." evidence="16" ref="1">
    <original>G</original>
    <variation>A</variation>
    <location>
        <position position="104"/>
    </location>
</feature>
<feature type="sequence conflict" description="In Ref. 1; AAR90342." evidence="16" ref="1">
    <original>L</original>
    <variation>I</variation>
    <location>
        <position position="108"/>
    </location>
</feature>
<feature type="sequence conflict" description="In Ref. 2; BAE34046." evidence="16" ref="2">
    <original>T</original>
    <variation>M</variation>
    <location>
        <position position="155"/>
    </location>
</feature>
<feature type="sequence conflict" description="In Ref. 1; AAR90342." evidence="16" ref="1">
    <original>N</original>
    <variation>S</variation>
    <location>
        <position position="174"/>
    </location>
</feature>
<feature type="sequence conflict" description="In Ref. 1; AAR90342." evidence="16" ref="1">
    <original>R</original>
    <variation>M</variation>
    <location>
        <position position="176"/>
    </location>
</feature>
<feature type="sequence conflict" description="In Ref. 2; BAE34046." evidence="16" ref="2">
    <original>L</original>
    <variation>P</variation>
    <location>
        <position position="531"/>
    </location>
</feature>
<feature type="sequence conflict" description="In Ref. 2; BAE34046." evidence="16" ref="2">
    <original>N</original>
    <variation>Y</variation>
    <location>
        <position position="575"/>
    </location>
</feature>
<feature type="sequence conflict" description="In Ref. 3; AAI17947." evidence="16" ref="3">
    <original>T</original>
    <variation>A</variation>
    <location>
        <position position="667"/>
    </location>
</feature>
<feature type="sequence conflict" description="In Ref. 3; AAI17947." evidence="16" ref="3">
    <original>N</original>
    <variation>K</variation>
    <location>
        <position position="671"/>
    </location>
</feature>
<feature type="sequence conflict" description="In Ref. 2; BAE34046." evidence="16" ref="2">
    <original>D</original>
    <variation>E</variation>
    <location>
        <position position="893"/>
    </location>
</feature>
<feature type="sequence conflict" description="In Ref. 2; BAE34046." evidence="16" ref="2">
    <original>S</original>
    <variation>C</variation>
    <location>
        <position position="1226"/>
    </location>
</feature>
<proteinExistence type="evidence at protein level"/>
<keyword id="KW-0067">ATP-binding</keyword>
<keyword id="KW-1003">Cell membrane</keyword>
<keyword id="KW-0966">Cell projection</keyword>
<keyword id="KW-0256">Endoplasmic reticulum</keyword>
<keyword id="KW-0333">Golgi apparatus</keyword>
<keyword id="KW-1009">Hearing</keyword>
<keyword id="KW-0445">Lipid transport</keyword>
<keyword id="KW-0460">Magnesium</keyword>
<keyword id="KW-0472">Membrane</keyword>
<keyword id="KW-0479">Metal-binding</keyword>
<keyword id="KW-0547">Nucleotide-binding</keyword>
<keyword id="KW-0597">Phosphoprotein</keyword>
<keyword id="KW-1185">Reference proteome</keyword>
<keyword id="KW-1278">Translocase</keyword>
<keyword id="KW-0812">Transmembrane</keyword>
<keyword id="KW-1133">Transmembrane helix</keyword>
<keyword id="KW-0813">Transport</keyword>